<keyword id="KW-0903">Direct protein sequencing</keyword>
<keyword id="KW-1015">Disulfide bond</keyword>
<keyword id="KW-0372">Hormone</keyword>
<keyword id="KW-1185">Reference proteome</keyword>
<keyword id="KW-0964">Secreted</keyword>
<keyword id="KW-0838">Vasoactive</keyword>
<gene>
    <name type="primary">NPPC</name>
</gene>
<feature type="peptide" id="PRO_0000043486" description="C-type natriuretic peptide">
    <location>
        <begin position="1"/>
        <end position="22"/>
    </location>
</feature>
<feature type="disulfide bond">
    <location>
        <begin position="6"/>
        <end position="22"/>
    </location>
</feature>
<dbReference type="PIR" id="JT0581">
    <property type="entry name" value="JT0581"/>
</dbReference>
<dbReference type="STRING" id="9031.ENSGALP00000007266"/>
<dbReference type="PaxDb" id="9031-ENSGALP00000007266"/>
<dbReference type="eggNOG" id="ENOG502S7N9">
    <property type="taxonomic scope" value="Eukaryota"/>
</dbReference>
<dbReference type="HOGENOM" id="CLU_160791_0_0_1"/>
<dbReference type="InParanoid" id="P21805"/>
<dbReference type="Proteomes" id="UP000000539">
    <property type="component" value="Unassembled WGS sequence"/>
</dbReference>
<dbReference type="GO" id="GO:0005576">
    <property type="term" value="C:extracellular region"/>
    <property type="evidence" value="ECO:0007669"/>
    <property type="project" value="UniProtKB-SubCell"/>
</dbReference>
<dbReference type="GO" id="GO:0005179">
    <property type="term" value="F:hormone activity"/>
    <property type="evidence" value="ECO:0007669"/>
    <property type="project" value="UniProtKB-KW"/>
</dbReference>
<dbReference type="GO" id="GO:0097746">
    <property type="term" value="P:blood vessel diameter maintenance"/>
    <property type="evidence" value="ECO:0007669"/>
    <property type="project" value="UniProtKB-KW"/>
</dbReference>
<dbReference type="GO" id="GO:0006182">
    <property type="term" value="P:cGMP biosynthetic process"/>
    <property type="evidence" value="ECO:0000250"/>
    <property type="project" value="UniProtKB"/>
</dbReference>
<dbReference type="GO" id="GO:0003418">
    <property type="term" value="P:growth plate cartilage chondrocyte differentiation"/>
    <property type="evidence" value="ECO:0000250"/>
    <property type="project" value="UniProtKB"/>
</dbReference>
<dbReference type="GO" id="GO:0003419">
    <property type="term" value="P:growth plate cartilage chondrocyte proliferation"/>
    <property type="evidence" value="ECO:0000250"/>
    <property type="project" value="UniProtKB"/>
</dbReference>
<dbReference type="GO" id="GO:0007168">
    <property type="term" value="P:receptor guanylyl cyclase signaling pathway"/>
    <property type="evidence" value="ECO:0000250"/>
    <property type="project" value="UniProtKB"/>
</dbReference>
<dbReference type="InterPro" id="IPR000663">
    <property type="entry name" value="Natr_peptide"/>
</dbReference>
<dbReference type="InterPro" id="IPR030480">
    <property type="entry name" value="Natr_peptide_CS"/>
</dbReference>
<dbReference type="InterPro" id="IPR002408">
    <property type="entry name" value="Natriuretic_peptide_brain"/>
</dbReference>
<dbReference type="Pfam" id="PF00212">
    <property type="entry name" value="ANP"/>
    <property type="match status" value="1"/>
</dbReference>
<dbReference type="PRINTS" id="PR00712">
    <property type="entry name" value="BNATPEPTIDE"/>
</dbReference>
<dbReference type="PRINTS" id="PR00710">
    <property type="entry name" value="NATPEPTIDES"/>
</dbReference>
<dbReference type="SMART" id="SM00183">
    <property type="entry name" value="NAT_PEP"/>
    <property type="match status" value="1"/>
</dbReference>
<dbReference type="PROSITE" id="PS00263">
    <property type="entry name" value="NATRIURETIC_PEPTIDE"/>
    <property type="match status" value="1"/>
</dbReference>
<proteinExistence type="evidence at protein level"/>
<sequence>GLSRSCFGVKLDRIGSMSGLGC</sequence>
<evidence type="ECO:0000250" key="1"/>
<evidence type="ECO:0000305" key="2"/>
<reference key="1">
    <citation type="journal article" date="1991" name="Biochem. Biophys. Res. Commun.">
        <title>Isolation and identification of C-type natriuretic peptide in chicken brain.</title>
        <authorList>
            <person name="Arimura J.J."/>
            <person name="Minamino N."/>
            <person name="Kangawa K."/>
            <person name="Matsuo H."/>
        </authorList>
    </citation>
    <scope>PROTEIN SEQUENCE</scope>
    <source>
        <tissue>Brain</tissue>
    </source>
</reference>
<organism>
    <name type="scientific">Gallus gallus</name>
    <name type="common">Chicken</name>
    <dbReference type="NCBI Taxonomy" id="9031"/>
    <lineage>
        <taxon>Eukaryota</taxon>
        <taxon>Metazoa</taxon>
        <taxon>Chordata</taxon>
        <taxon>Craniata</taxon>
        <taxon>Vertebrata</taxon>
        <taxon>Euteleostomi</taxon>
        <taxon>Archelosauria</taxon>
        <taxon>Archosauria</taxon>
        <taxon>Dinosauria</taxon>
        <taxon>Saurischia</taxon>
        <taxon>Theropoda</taxon>
        <taxon>Coelurosauria</taxon>
        <taxon>Aves</taxon>
        <taxon>Neognathae</taxon>
        <taxon>Galloanserae</taxon>
        <taxon>Galliformes</taxon>
        <taxon>Phasianidae</taxon>
        <taxon>Phasianinae</taxon>
        <taxon>Gallus</taxon>
    </lineage>
</organism>
<comment type="function">
    <text evidence="1">Hormone which plays a role in endochondral ossification through regulation of cartilaginous growth plate chondrocytes proliferation and differentiation. May also be vasoactive and natriuretic. Specifically binds and stimulates the cGMP production of the NPR2 receptor. Binds the clearance receptor NPR3 (By similarity).</text>
</comment>
<comment type="subcellular location">
    <subcellularLocation>
        <location>Secreted</location>
    </subcellularLocation>
</comment>
<comment type="similarity">
    <text evidence="2">Belongs to the natriuretic peptide family.</text>
</comment>
<protein>
    <recommendedName>
        <fullName>C-type natriuretic peptide</fullName>
        <shortName>CNP</shortName>
    </recommendedName>
</protein>
<name>ANFC_CHICK</name>
<accession>P21805</accession>